<gene>
    <name evidence="1" type="primary">rpsU</name>
    <name evidence="1" type="synonym">rps21</name>
    <name type="ordered locus">Tery_4602</name>
</gene>
<proteinExistence type="inferred from homology"/>
<evidence type="ECO:0000255" key="1">
    <source>
        <dbReference type="HAMAP-Rule" id="MF_00358"/>
    </source>
</evidence>
<evidence type="ECO:0000256" key="2">
    <source>
        <dbReference type="SAM" id="MobiDB-lite"/>
    </source>
</evidence>
<evidence type="ECO:0000305" key="3"/>
<organism>
    <name type="scientific">Trichodesmium erythraeum (strain IMS101)</name>
    <dbReference type="NCBI Taxonomy" id="203124"/>
    <lineage>
        <taxon>Bacteria</taxon>
        <taxon>Bacillati</taxon>
        <taxon>Cyanobacteriota</taxon>
        <taxon>Cyanophyceae</taxon>
        <taxon>Oscillatoriophycideae</taxon>
        <taxon>Oscillatoriales</taxon>
        <taxon>Microcoleaceae</taxon>
        <taxon>Trichodesmium</taxon>
    </lineage>
</organism>
<comment type="similarity">
    <text evidence="1">Belongs to the bacterial ribosomal protein bS21 family.</text>
</comment>
<dbReference type="EMBL" id="CP000393">
    <property type="protein sequence ID" value="ABG53577.1"/>
    <property type="molecule type" value="Genomic_DNA"/>
</dbReference>
<dbReference type="RefSeq" id="WP_011613894.1">
    <property type="nucleotide sequence ID" value="NC_008312.1"/>
</dbReference>
<dbReference type="SMR" id="Q10VZ7"/>
<dbReference type="STRING" id="203124.Tery_4602"/>
<dbReference type="KEGG" id="ter:Tery_4602"/>
<dbReference type="eggNOG" id="COG0828">
    <property type="taxonomic scope" value="Bacteria"/>
</dbReference>
<dbReference type="HOGENOM" id="CLU_159258_3_1_3"/>
<dbReference type="OrthoDB" id="9799244at2"/>
<dbReference type="GO" id="GO:1990904">
    <property type="term" value="C:ribonucleoprotein complex"/>
    <property type="evidence" value="ECO:0007669"/>
    <property type="project" value="UniProtKB-KW"/>
</dbReference>
<dbReference type="GO" id="GO:0005840">
    <property type="term" value="C:ribosome"/>
    <property type="evidence" value="ECO:0007669"/>
    <property type="project" value="UniProtKB-KW"/>
</dbReference>
<dbReference type="GO" id="GO:0003735">
    <property type="term" value="F:structural constituent of ribosome"/>
    <property type="evidence" value="ECO:0007669"/>
    <property type="project" value="InterPro"/>
</dbReference>
<dbReference type="GO" id="GO:0006412">
    <property type="term" value="P:translation"/>
    <property type="evidence" value="ECO:0007669"/>
    <property type="project" value="UniProtKB-UniRule"/>
</dbReference>
<dbReference type="Gene3D" id="1.20.5.1150">
    <property type="entry name" value="Ribosomal protein S8"/>
    <property type="match status" value="1"/>
</dbReference>
<dbReference type="HAMAP" id="MF_00358">
    <property type="entry name" value="Ribosomal_bS21"/>
    <property type="match status" value="1"/>
</dbReference>
<dbReference type="InterPro" id="IPR001911">
    <property type="entry name" value="Ribosomal_bS21"/>
</dbReference>
<dbReference type="InterPro" id="IPR038380">
    <property type="entry name" value="Ribosomal_bS21_sf"/>
</dbReference>
<dbReference type="NCBIfam" id="TIGR00030">
    <property type="entry name" value="S21p"/>
    <property type="match status" value="1"/>
</dbReference>
<dbReference type="PANTHER" id="PTHR21109">
    <property type="entry name" value="MITOCHONDRIAL 28S RIBOSOMAL PROTEIN S21"/>
    <property type="match status" value="1"/>
</dbReference>
<dbReference type="PANTHER" id="PTHR21109:SF0">
    <property type="entry name" value="SMALL RIBOSOMAL SUBUNIT PROTEIN BS21M"/>
    <property type="match status" value="1"/>
</dbReference>
<dbReference type="Pfam" id="PF01165">
    <property type="entry name" value="Ribosomal_S21"/>
    <property type="match status" value="1"/>
</dbReference>
<dbReference type="PRINTS" id="PR00976">
    <property type="entry name" value="RIBOSOMALS21"/>
</dbReference>
<sequence>MTQVILGENEGIESALRRFKRQVSQAGIFPDMKKHRHFETPIEKRKRKAMALQKQRKRRSRY</sequence>
<name>RS21_TRIEI</name>
<feature type="chain" id="PRO_0000266795" description="Small ribosomal subunit protein bS21">
    <location>
        <begin position="1"/>
        <end position="62"/>
    </location>
</feature>
<feature type="region of interest" description="Disordered" evidence="2">
    <location>
        <begin position="43"/>
        <end position="62"/>
    </location>
</feature>
<feature type="compositionally biased region" description="Basic residues" evidence="2">
    <location>
        <begin position="44"/>
        <end position="62"/>
    </location>
</feature>
<reference key="1">
    <citation type="journal article" date="2015" name="Proc. Natl. Acad. Sci. U.S.A.">
        <title>Trichodesmium genome maintains abundant, widespread noncoding DNA in situ, despite oligotrophic lifestyle.</title>
        <authorList>
            <person name="Walworth N."/>
            <person name="Pfreundt U."/>
            <person name="Nelson W.C."/>
            <person name="Mincer T."/>
            <person name="Heidelberg J.F."/>
            <person name="Fu F."/>
            <person name="Waterbury J.B."/>
            <person name="Glavina del Rio T."/>
            <person name="Goodwin L."/>
            <person name="Kyrpides N.C."/>
            <person name="Land M.L."/>
            <person name="Woyke T."/>
            <person name="Hutchins D.A."/>
            <person name="Hess W.R."/>
            <person name="Webb E.A."/>
        </authorList>
    </citation>
    <scope>NUCLEOTIDE SEQUENCE [LARGE SCALE GENOMIC DNA]</scope>
    <source>
        <strain>IMS101</strain>
    </source>
</reference>
<keyword id="KW-0687">Ribonucleoprotein</keyword>
<keyword id="KW-0689">Ribosomal protein</keyword>
<accession>Q10VZ7</accession>
<protein>
    <recommendedName>
        <fullName evidence="1">Small ribosomal subunit protein bS21</fullName>
    </recommendedName>
    <alternativeName>
        <fullName evidence="3">30S ribosomal protein S21</fullName>
    </alternativeName>
</protein>